<accession>B9WE91</accession>
<name>MTC6_CANDC</name>
<protein>
    <recommendedName>
        <fullName>Maintenance of telomere capping protein 6</fullName>
    </recommendedName>
</protein>
<dbReference type="EMBL" id="FM992690">
    <property type="protein sequence ID" value="CAX43002.1"/>
    <property type="molecule type" value="Genomic_DNA"/>
</dbReference>
<dbReference type="RefSeq" id="XP_002419408.1">
    <property type="nucleotide sequence ID" value="XM_002419363.1"/>
</dbReference>
<dbReference type="GlyCosmos" id="B9WE91">
    <property type="glycosylation" value="19 sites, No reported glycans"/>
</dbReference>
<dbReference type="GeneID" id="8047231"/>
<dbReference type="KEGG" id="cdu:CD36_84990"/>
<dbReference type="CGD" id="CAL0000160876">
    <property type="gene designation" value="Cd36_84990"/>
</dbReference>
<dbReference type="VEuPathDB" id="FungiDB:CD36_84990"/>
<dbReference type="eggNOG" id="ENOG502QVFP">
    <property type="taxonomic scope" value="Eukaryota"/>
</dbReference>
<dbReference type="HOGENOM" id="CLU_033723_0_0_1"/>
<dbReference type="OrthoDB" id="5573651at2759"/>
<dbReference type="Proteomes" id="UP000002605">
    <property type="component" value="Chromosome 3"/>
</dbReference>
<dbReference type="GO" id="GO:0016020">
    <property type="term" value="C:membrane"/>
    <property type="evidence" value="ECO:0007669"/>
    <property type="project" value="UniProtKB-SubCell"/>
</dbReference>
<dbReference type="InterPro" id="IPR051008">
    <property type="entry name" value="Telomere_Capping_Maintenance"/>
</dbReference>
<dbReference type="PANTHER" id="PTHR35518:SF2">
    <property type="entry name" value="MAINTENANCE OF TELOMERE CAPPING PROTEIN 6"/>
    <property type="match status" value="1"/>
</dbReference>
<dbReference type="PANTHER" id="PTHR35518">
    <property type="entry name" value="MAINTENANCE OF TELOMOERE CAPPING"/>
    <property type="match status" value="1"/>
</dbReference>
<dbReference type="Pfam" id="PF25506">
    <property type="entry name" value="TIM-barrel_MTC6"/>
    <property type="match status" value="1"/>
</dbReference>
<comment type="function">
    <text evidence="1">May be involved in telomere capping.</text>
</comment>
<comment type="subcellular location">
    <subcellularLocation>
        <location evidence="3">Membrane</location>
        <topology evidence="3">Single-pass type I membrane protein</topology>
    </subcellularLocation>
</comment>
<comment type="similarity">
    <text evidence="3">Belongs to the MTC6 family.</text>
</comment>
<gene>
    <name type="primary">MTC6</name>
    <name type="ORF">CD36_84990</name>
</gene>
<organism>
    <name type="scientific">Candida dubliniensis (strain CD36 / ATCC MYA-646 / CBS 7987 / NCPF 3949 / NRRL Y-17841)</name>
    <name type="common">Yeast</name>
    <dbReference type="NCBI Taxonomy" id="573826"/>
    <lineage>
        <taxon>Eukaryota</taxon>
        <taxon>Fungi</taxon>
        <taxon>Dikarya</taxon>
        <taxon>Ascomycota</taxon>
        <taxon>Saccharomycotina</taxon>
        <taxon>Pichiomycetes</taxon>
        <taxon>Debaryomycetaceae</taxon>
        <taxon>Candida/Lodderomyces clade</taxon>
        <taxon>Candida</taxon>
    </lineage>
</organism>
<reference key="1">
    <citation type="journal article" date="2009" name="Genome Res.">
        <title>Comparative genomics of the fungal pathogens Candida dubliniensis and Candida albicans.</title>
        <authorList>
            <person name="Jackson A.P."/>
            <person name="Gamble J.A."/>
            <person name="Yeomans T."/>
            <person name="Moran G.P."/>
            <person name="Saunders D."/>
            <person name="Harris D."/>
            <person name="Aslett M."/>
            <person name="Barrell J.F."/>
            <person name="Butler G."/>
            <person name="Citiulo F."/>
            <person name="Coleman D.C."/>
            <person name="de Groot P.W.J."/>
            <person name="Goodwin T.J."/>
            <person name="Quail M.A."/>
            <person name="McQuillan J."/>
            <person name="Munro C.A."/>
            <person name="Pain A."/>
            <person name="Poulter R.T."/>
            <person name="Rajandream M.A."/>
            <person name="Renauld H."/>
            <person name="Spiering M.J."/>
            <person name="Tivey A."/>
            <person name="Gow N.A.R."/>
            <person name="Barrell B."/>
            <person name="Sullivan D.J."/>
            <person name="Berriman M."/>
        </authorList>
    </citation>
    <scope>NUCLEOTIDE SEQUENCE [LARGE SCALE GENOMIC DNA]</scope>
    <source>
        <strain>CD36 / ATCC MYA-646 / CBS 7987 / NCPF 3949 / NRRL Y-17841</strain>
    </source>
</reference>
<sequence>MIGLLFVFSVLLSFSVGYIFPFSTSNGPTVNDTLQHAIRSQRDVSKPIPIDRVEFSGVSLSSFFESEGYSSDSLSNLYGLLKENIAGVMIDLYWNEFTSKWQLCPAPFPNNITYTSSNRVVDVSWNNRTYKCDPNLSTDDIMSILNNFIRDTNTDVEANFMHVMYNLKSIHYKKSNQTINLENAYKEKNSNFNVGMDTLNDTVSLLSSYIFTPLLLEQYQSSSSKNANSSSSIRYIDSLNETQAIQKFYNQSTILMPSLQTTLLTQYKRLMVHVISNDMAESSRSYQISFSDKETIFFNNVFPAMIGHTNNASADDFCYELTHAYNGTDVNIMEFNRVSLNSTLRLIIDNDKTPFTTDSLSKYVRCGYCPVFNSTQYSSQKVTEGNSSIISQEFTSNLFWSWAPGQPSGPDNCTNCTRPVTNYTSKYSEASNGGSDEEEHSNNIAYKCVALTENGWEVSNCYEKYLFACQNKLSRNEWKLDNYTKRNYFDLDDDDCPEGYFFSLPRSNIEMLSLMTTVKQENVSYPIWIDLNDITVENCFVSGGPYAQCPYQETVTTDKFVRMIAPSFVVAMVVLVLIFLEKVFRKTPIQTNRKRYWKKAIQEYYAKNDYEGVPS</sequence>
<proteinExistence type="inferred from homology"/>
<feature type="signal peptide" evidence="2">
    <location>
        <begin position="1"/>
        <end position="17"/>
    </location>
</feature>
<feature type="chain" id="PRO_0000407774" description="Maintenance of telomere capping protein 6">
    <location>
        <begin position="18"/>
        <end position="615"/>
    </location>
</feature>
<feature type="topological domain" description="Extracellular" evidence="2">
    <location>
        <begin position="18"/>
        <end position="559"/>
    </location>
</feature>
<feature type="transmembrane region" description="Helical" evidence="2">
    <location>
        <begin position="560"/>
        <end position="580"/>
    </location>
</feature>
<feature type="topological domain" description="Cytoplasmic" evidence="2">
    <location>
        <begin position="581"/>
        <end position="615"/>
    </location>
</feature>
<feature type="glycosylation site" description="N-linked (GlcNAc...) asparagine" evidence="2">
    <location>
        <position position="31"/>
    </location>
</feature>
<feature type="glycosylation site" description="N-linked (GlcNAc...) asparagine" evidence="2">
    <location>
        <position position="111"/>
    </location>
</feature>
<feature type="glycosylation site" description="N-linked (GlcNAc...) asparagine" evidence="2">
    <location>
        <position position="127"/>
    </location>
</feature>
<feature type="glycosylation site" description="N-linked (GlcNAc...) asparagine" evidence="2">
    <location>
        <position position="135"/>
    </location>
</feature>
<feature type="glycosylation site" description="N-linked (GlcNAc...) asparagine" evidence="2">
    <location>
        <position position="176"/>
    </location>
</feature>
<feature type="glycosylation site" description="N-linked (GlcNAc...) asparagine" evidence="2">
    <location>
        <position position="200"/>
    </location>
</feature>
<feature type="glycosylation site" description="N-linked (GlcNAc...) asparagine" evidence="2">
    <location>
        <position position="228"/>
    </location>
</feature>
<feature type="glycosylation site" description="N-linked (GlcNAc...) asparagine" evidence="2">
    <location>
        <position position="240"/>
    </location>
</feature>
<feature type="glycosylation site" description="N-linked (GlcNAc...) asparagine" evidence="2">
    <location>
        <position position="250"/>
    </location>
</feature>
<feature type="glycosylation site" description="N-linked (GlcNAc...) asparagine" evidence="2">
    <location>
        <position position="311"/>
    </location>
</feature>
<feature type="glycosylation site" description="N-linked (GlcNAc...) asparagine" evidence="2">
    <location>
        <position position="326"/>
    </location>
</feature>
<feature type="glycosylation site" description="N-linked (GlcNAc...) asparagine" evidence="2">
    <location>
        <position position="341"/>
    </location>
</feature>
<feature type="glycosylation site" description="N-linked (GlcNAc...) asparagine" evidence="2">
    <location>
        <position position="373"/>
    </location>
</feature>
<feature type="glycosylation site" description="N-linked (GlcNAc...) asparagine" evidence="2">
    <location>
        <position position="386"/>
    </location>
</feature>
<feature type="glycosylation site" description="N-linked (GlcNAc...) asparagine" evidence="2">
    <location>
        <position position="412"/>
    </location>
</feature>
<feature type="glycosylation site" description="N-linked (GlcNAc...) asparagine" evidence="2">
    <location>
        <position position="415"/>
    </location>
</feature>
<feature type="glycosylation site" description="N-linked (GlcNAc...) asparagine" evidence="2">
    <location>
        <position position="422"/>
    </location>
</feature>
<feature type="glycosylation site" description="N-linked (GlcNAc...) asparagine" evidence="2">
    <location>
        <position position="482"/>
    </location>
</feature>
<feature type="glycosylation site" description="N-linked (GlcNAc...) asparagine" evidence="2">
    <location>
        <position position="522"/>
    </location>
</feature>
<evidence type="ECO:0000250" key="1"/>
<evidence type="ECO:0000255" key="2"/>
<evidence type="ECO:0000305" key="3"/>
<keyword id="KW-0325">Glycoprotein</keyword>
<keyword id="KW-0472">Membrane</keyword>
<keyword id="KW-0732">Signal</keyword>
<keyword id="KW-0812">Transmembrane</keyword>
<keyword id="KW-1133">Transmembrane helix</keyword>